<organism>
    <name type="scientific">Xenopus laevis</name>
    <name type="common">African clawed frog</name>
    <dbReference type="NCBI Taxonomy" id="8355"/>
    <lineage>
        <taxon>Eukaryota</taxon>
        <taxon>Metazoa</taxon>
        <taxon>Chordata</taxon>
        <taxon>Craniata</taxon>
        <taxon>Vertebrata</taxon>
        <taxon>Euteleostomi</taxon>
        <taxon>Amphibia</taxon>
        <taxon>Batrachia</taxon>
        <taxon>Anura</taxon>
        <taxon>Pipoidea</taxon>
        <taxon>Pipidae</taxon>
        <taxon>Xenopodinae</taxon>
        <taxon>Xenopus</taxon>
        <taxon>Xenopus</taxon>
    </lineage>
</organism>
<feature type="chain" id="PRO_0000048777" description="Transcription factor Sox-13">
    <location>
        <begin position="1"/>
        <end position="567"/>
    </location>
</feature>
<feature type="DNA-binding region" description="HMG box" evidence="3">
    <location>
        <begin position="392"/>
        <end position="460"/>
    </location>
</feature>
<feature type="region of interest" description="Disordered" evidence="4">
    <location>
        <begin position="66"/>
        <end position="86"/>
    </location>
</feature>
<feature type="region of interest" description="Disordered" evidence="4">
    <location>
        <begin position="249"/>
        <end position="307"/>
    </location>
</feature>
<feature type="region of interest" description="Disordered" evidence="4">
    <location>
        <begin position="490"/>
        <end position="513"/>
    </location>
</feature>
<feature type="sequence conflict" description="In Ref. 1; BAA09119." evidence="6" ref="1">
    <original>A</original>
    <variation>V</variation>
    <location>
        <position position="483"/>
    </location>
</feature>
<protein>
    <recommendedName>
        <fullName>Transcription factor Sox-13</fullName>
    </recommendedName>
    <alternativeName>
        <fullName>Transcription factor Sox-12</fullName>
        <shortName>xSox-12</shortName>
        <shortName>xSox12</shortName>
    </alternativeName>
</protein>
<dbReference type="EMBL" id="D50552">
    <property type="protein sequence ID" value="BAA09119.1"/>
    <property type="status" value="ALT_FRAME"/>
    <property type="molecule type" value="mRNA"/>
</dbReference>
<dbReference type="EMBL" id="BC068647">
    <property type="protein sequence ID" value="AAH68647.1"/>
    <property type="molecule type" value="mRNA"/>
</dbReference>
<dbReference type="EMBL" id="X65655">
    <property type="protein sequence ID" value="CAA46606.1"/>
    <property type="molecule type" value="mRNA"/>
</dbReference>
<dbReference type="PIR" id="S71466">
    <property type="entry name" value="S71466"/>
</dbReference>
<dbReference type="RefSeq" id="NP_001081238.1">
    <property type="nucleotide sequence ID" value="NM_001087769.1"/>
</dbReference>
<dbReference type="SMR" id="P40649"/>
<dbReference type="GeneID" id="397727"/>
<dbReference type="KEGG" id="xla:397727"/>
<dbReference type="AGR" id="Xenbase:XB-GENE-865496"/>
<dbReference type="CTD" id="397727"/>
<dbReference type="Xenbase" id="XB-GENE-865496">
    <property type="gene designation" value="sox13.S"/>
</dbReference>
<dbReference type="OrthoDB" id="6247875at2759"/>
<dbReference type="Proteomes" id="UP000186698">
    <property type="component" value="Chromosome 2S"/>
</dbReference>
<dbReference type="Bgee" id="397727">
    <property type="expression patterns" value="Expressed in internal ear and 19 other cell types or tissues"/>
</dbReference>
<dbReference type="GO" id="GO:0005634">
    <property type="term" value="C:nucleus"/>
    <property type="evidence" value="ECO:0000250"/>
    <property type="project" value="UniProtKB"/>
</dbReference>
<dbReference type="GO" id="GO:0000981">
    <property type="term" value="F:DNA-binding transcription factor activity, RNA polymerase II-specific"/>
    <property type="evidence" value="ECO:0000318"/>
    <property type="project" value="GO_Central"/>
</dbReference>
<dbReference type="GO" id="GO:0000978">
    <property type="term" value="F:RNA polymerase II cis-regulatory region sequence-specific DNA binding"/>
    <property type="evidence" value="ECO:0000318"/>
    <property type="project" value="GO_Central"/>
</dbReference>
<dbReference type="GO" id="GO:0043565">
    <property type="term" value="F:sequence-specific DNA binding"/>
    <property type="evidence" value="ECO:0000250"/>
    <property type="project" value="UniProtKB"/>
</dbReference>
<dbReference type="GO" id="GO:0045165">
    <property type="term" value="P:cell fate commitment"/>
    <property type="evidence" value="ECO:0000318"/>
    <property type="project" value="GO_Central"/>
</dbReference>
<dbReference type="GO" id="GO:0006357">
    <property type="term" value="P:regulation of transcription by RNA polymerase II"/>
    <property type="evidence" value="ECO:0000318"/>
    <property type="project" value="GO_Central"/>
</dbReference>
<dbReference type="CDD" id="cd22030">
    <property type="entry name" value="HMG-box_SoxD"/>
    <property type="match status" value="1"/>
</dbReference>
<dbReference type="FunFam" id="1.10.30.10:FF:000003">
    <property type="entry name" value="Putative transcription factor SOX-6"/>
    <property type="match status" value="1"/>
</dbReference>
<dbReference type="Gene3D" id="1.10.30.10">
    <property type="entry name" value="High mobility group box domain"/>
    <property type="match status" value="1"/>
</dbReference>
<dbReference type="InterPro" id="IPR009071">
    <property type="entry name" value="HMG_box_dom"/>
</dbReference>
<dbReference type="InterPro" id="IPR036910">
    <property type="entry name" value="HMG_box_dom_sf"/>
</dbReference>
<dbReference type="InterPro" id="IPR051356">
    <property type="entry name" value="SOX/SOX-like_TF"/>
</dbReference>
<dbReference type="PANTHER" id="PTHR45789">
    <property type="entry name" value="FI18025P1"/>
    <property type="match status" value="1"/>
</dbReference>
<dbReference type="PANTHER" id="PTHR45789:SF4">
    <property type="entry name" value="TRANSCRIPTION FACTOR SOX-13"/>
    <property type="match status" value="1"/>
</dbReference>
<dbReference type="Pfam" id="PF00505">
    <property type="entry name" value="HMG_box"/>
    <property type="match status" value="1"/>
</dbReference>
<dbReference type="SMART" id="SM00398">
    <property type="entry name" value="HMG"/>
    <property type="match status" value="1"/>
</dbReference>
<dbReference type="SUPFAM" id="SSF47095">
    <property type="entry name" value="HMG-box"/>
    <property type="match status" value="1"/>
</dbReference>
<dbReference type="PROSITE" id="PS50118">
    <property type="entry name" value="HMG_BOX_2"/>
    <property type="match status" value="1"/>
</dbReference>
<proteinExistence type="evidence at transcript level"/>
<accession>P40649</accession>
<accession>Q6NUE6</accession>
<sequence length="567" mass="63408">MDTIQGELVYCPANEQECRISAKIPISPSEDTGGPCLKVEEDYEEVSLQTGIVPVFIKQDYESSSQDANDLCKPQGDAPASDRKEENLKLSKTVSDAMPALEKFLSNDWKEILLGNSTVGSKDFKGTKESLAEKELQLLLMIHQLTGLRDQLLSAHSEHRNLAAMLFEKQQQQMDLARQQQEQIAKQQQQLIQQQHKINMLQQQIQQVNMPYVMIPAFPSAQTVSAEPQMSLPIQPIPCKPVEYPMPLLHNSHAGRGSASAKHQETSQPLNLTAKPKCPDQFPNSSSSPEFRMSPVGSQCGGTMDSASSSQKANLPLGFLGEGDAITKAIQEACQLLHGQNTSPEHCQQNYRKELLDTLPEKNIQDVTSLHHTEASLLRCSMDIDGSRGNHIKRPMNAFMVWAKDERRKILQAFPDMHNSSISKILGSRWKSMSNGEKQPYYEEQARLSRQHLERYPDYKYKPRPKRTCIVEGKRLRVGEYKALMKNRRQDTRSLGSLQCPPSPSGFSSQSLLGNLSQSPQECNIQVVTSQCLMSHELHGAIHMAKDICSDSEDSVKSDGELVVITD</sequence>
<evidence type="ECO:0000250" key="1">
    <source>
        <dbReference type="UniProtKB" id="Q04891"/>
    </source>
</evidence>
<evidence type="ECO:0000250" key="2">
    <source>
        <dbReference type="UniProtKB" id="Q9UN79"/>
    </source>
</evidence>
<evidence type="ECO:0000255" key="3">
    <source>
        <dbReference type="PROSITE-ProRule" id="PRU00267"/>
    </source>
</evidence>
<evidence type="ECO:0000256" key="4">
    <source>
        <dbReference type="SAM" id="MobiDB-lite"/>
    </source>
</evidence>
<evidence type="ECO:0000269" key="5">
    <source>
    </source>
</evidence>
<evidence type="ECO:0000305" key="6"/>
<keyword id="KW-0238">DNA-binding</keyword>
<keyword id="KW-0539">Nucleus</keyword>
<keyword id="KW-1185">Reference proteome</keyword>
<keyword id="KW-0804">Transcription</keyword>
<keyword id="KW-0805">Transcription regulation</keyword>
<gene>
    <name type="primary">sox13</name>
    <name type="synonym">sox12</name>
</gene>
<name>SOX13_XENLA</name>
<reference key="1">
    <citation type="journal article" date="1996" name="Biochim. Biophys. Acta">
        <title>Cloning and expression of Xenopus laevis xSox12 cDNA.</title>
        <authorList>
            <person name="Komatsu N."/>
            <person name="Hiraoka Y."/>
            <person name="Shiozawa M."/>
            <person name="Ogawa M."/>
            <person name="Aiso S."/>
        </authorList>
    </citation>
    <scope>NUCLEOTIDE SEQUENCE [MRNA]</scope>
    <scope>TISSUE SPECIFICITY</scope>
    <source>
        <tissue>Oocyte</tissue>
    </source>
</reference>
<reference key="2">
    <citation type="submission" date="2004-04" db="EMBL/GenBank/DDBJ databases">
        <authorList>
            <consortium name="NIH - Xenopus Gene Collection (XGC) project"/>
        </authorList>
    </citation>
    <scope>NUCLEOTIDE SEQUENCE [LARGE SCALE MRNA]</scope>
    <source>
        <tissue>Gastrula</tissue>
    </source>
</reference>
<reference key="3">
    <citation type="journal article" date="1992" name="Nucleic Acids Res.">
        <title>A conserved family of genes related to the testis determining gene, SRY.</title>
        <authorList>
            <person name="Denny P."/>
            <person name="Swift S."/>
            <person name="Brand N."/>
            <person name="Dabhade N."/>
            <person name="Barton P."/>
            <person name="Ashworth A."/>
        </authorList>
    </citation>
    <scope>NUCLEOTIDE SEQUENCE [MRNA] OF 403-456</scope>
    <source>
        <tissue>Oocyte</tissue>
    </source>
</reference>
<comment type="function">
    <text evidence="1">Transcription factor that binds to DNA at the consensus sequence 5'-AACAAT-3'.</text>
</comment>
<comment type="subunit">
    <text evidence="2">Homodimer.</text>
</comment>
<comment type="subcellular location">
    <subcellularLocation>
        <location evidence="3">Nucleus</location>
    </subcellularLocation>
</comment>
<comment type="tissue specificity">
    <text evidence="5">Expression is highest in the ovary, with weak expression in other adult tissues.</text>
</comment>
<comment type="caution">
    <text evidence="6">Was originally termed sox-12 (PubMed:1614875, PubMed:8597594).</text>
</comment>
<comment type="sequence caution" evidence="6">
    <conflict type="frameshift">
        <sequence resource="EMBL-CDS" id="BAA09119"/>
    </conflict>
</comment>